<reference key="1">
    <citation type="submission" date="2007-04" db="EMBL/GenBank/DDBJ databases">
        <title>Complete sequence of Pseudomonas mendocina ymp.</title>
        <authorList>
            <consortium name="US DOE Joint Genome Institute"/>
            <person name="Copeland A."/>
            <person name="Lucas S."/>
            <person name="Lapidus A."/>
            <person name="Barry K."/>
            <person name="Glavina del Rio T."/>
            <person name="Dalin E."/>
            <person name="Tice H."/>
            <person name="Pitluck S."/>
            <person name="Kiss H."/>
            <person name="Brettin T."/>
            <person name="Detter J.C."/>
            <person name="Bruce D."/>
            <person name="Han C."/>
            <person name="Schmutz J."/>
            <person name="Larimer F."/>
            <person name="Land M."/>
            <person name="Hauser L."/>
            <person name="Kyrpides N."/>
            <person name="Mikhailova N."/>
            <person name="Hersman L."/>
            <person name="Dubois J."/>
            <person name="Maurice P."/>
            <person name="Richardson P."/>
        </authorList>
    </citation>
    <scope>NUCLEOTIDE SEQUENCE [LARGE SCALE GENOMIC DNA]</scope>
    <source>
        <strain>ymp</strain>
    </source>
</reference>
<evidence type="ECO:0000255" key="1">
    <source>
        <dbReference type="HAMAP-Rule" id="MF_00160"/>
    </source>
</evidence>
<name>SERC_ECTM1</name>
<feature type="chain" id="PRO_1000123474" description="Phosphoserine aminotransferase">
    <location>
        <begin position="1"/>
        <end position="361"/>
    </location>
</feature>
<feature type="binding site" evidence="1">
    <location>
        <position position="43"/>
    </location>
    <ligand>
        <name>L-glutamate</name>
        <dbReference type="ChEBI" id="CHEBI:29985"/>
    </ligand>
</feature>
<feature type="binding site" evidence="1">
    <location>
        <begin position="77"/>
        <end position="78"/>
    </location>
    <ligand>
        <name>pyridoxal 5'-phosphate</name>
        <dbReference type="ChEBI" id="CHEBI:597326"/>
    </ligand>
</feature>
<feature type="binding site" evidence="1">
    <location>
        <position position="103"/>
    </location>
    <ligand>
        <name>pyridoxal 5'-phosphate</name>
        <dbReference type="ChEBI" id="CHEBI:597326"/>
    </ligand>
</feature>
<feature type="binding site" evidence="1">
    <location>
        <position position="153"/>
    </location>
    <ligand>
        <name>pyridoxal 5'-phosphate</name>
        <dbReference type="ChEBI" id="CHEBI:597326"/>
    </ligand>
</feature>
<feature type="binding site" evidence="1">
    <location>
        <position position="173"/>
    </location>
    <ligand>
        <name>pyridoxal 5'-phosphate</name>
        <dbReference type="ChEBI" id="CHEBI:597326"/>
    </ligand>
</feature>
<feature type="binding site" evidence="1">
    <location>
        <position position="196"/>
    </location>
    <ligand>
        <name>pyridoxal 5'-phosphate</name>
        <dbReference type="ChEBI" id="CHEBI:597326"/>
    </ligand>
</feature>
<feature type="binding site" evidence="1">
    <location>
        <begin position="238"/>
        <end position="239"/>
    </location>
    <ligand>
        <name>pyridoxal 5'-phosphate</name>
        <dbReference type="ChEBI" id="CHEBI:597326"/>
    </ligand>
</feature>
<feature type="modified residue" description="N6-(pyridoxal phosphate)lysine" evidence="1">
    <location>
        <position position="197"/>
    </location>
</feature>
<dbReference type="EC" id="2.6.1.52" evidence="1"/>
<dbReference type="EMBL" id="CP000680">
    <property type="protein sequence ID" value="ABP84613.1"/>
    <property type="molecule type" value="Genomic_DNA"/>
</dbReference>
<dbReference type="SMR" id="A4XTE7"/>
<dbReference type="STRING" id="399739.Pmen_1849"/>
<dbReference type="KEGG" id="pmy:Pmen_1849"/>
<dbReference type="PATRIC" id="fig|399739.8.peg.1879"/>
<dbReference type="eggNOG" id="COG1932">
    <property type="taxonomic scope" value="Bacteria"/>
</dbReference>
<dbReference type="HOGENOM" id="CLU_034866_0_2_6"/>
<dbReference type="OrthoDB" id="9809412at2"/>
<dbReference type="UniPathway" id="UPA00135">
    <property type="reaction ID" value="UER00197"/>
</dbReference>
<dbReference type="UniPathway" id="UPA00244">
    <property type="reaction ID" value="UER00311"/>
</dbReference>
<dbReference type="GO" id="GO:0005737">
    <property type="term" value="C:cytoplasm"/>
    <property type="evidence" value="ECO:0007669"/>
    <property type="project" value="UniProtKB-SubCell"/>
</dbReference>
<dbReference type="GO" id="GO:0004648">
    <property type="term" value="F:O-phospho-L-serine:2-oxoglutarate aminotransferase activity"/>
    <property type="evidence" value="ECO:0007669"/>
    <property type="project" value="UniProtKB-UniRule"/>
</dbReference>
<dbReference type="GO" id="GO:0030170">
    <property type="term" value="F:pyridoxal phosphate binding"/>
    <property type="evidence" value="ECO:0007669"/>
    <property type="project" value="UniProtKB-UniRule"/>
</dbReference>
<dbReference type="GO" id="GO:0006564">
    <property type="term" value="P:L-serine biosynthetic process"/>
    <property type="evidence" value="ECO:0007669"/>
    <property type="project" value="UniProtKB-UniRule"/>
</dbReference>
<dbReference type="GO" id="GO:0008615">
    <property type="term" value="P:pyridoxine biosynthetic process"/>
    <property type="evidence" value="ECO:0007669"/>
    <property type="project" value="UniProtKB-UniRule"/>
</dbReference>
<dbReference type="CDD" id="cd00611">
    <property type="entry name" value="PSAT_like"/>
    <property type="match status" value="1"/>
</dbReference>
<dbReference type="FunFam" id="3.40.640.10:FF:000010">
    <property type="entry name" value="Phosphoserine aminotransferase"/>
    <property type="match status" value="1"/>
</dbReference>
<dbReference type="FunFam" id="3.90.1150.10:FF:000006">
    <property type="entry name" value="Phosphoserine aminotransferase"/>
    <property type="match status" value="1"/>
</dbReference>
<dbReference type="Gene3D" id="3.90.1150.10">
    <property type="entry name" value="Aspartate Aminotransferase, domain 1"/>
    <property type="match status" value="1"/>
</dbReference>
<dbReference type="Gene3D" id="3.40.640.10">
    <property type="entry name" value="Type I PLP-dependent aspartate aminotransferase-like (Major domain)"/>
    <property type="match status" value="1"/>
</dbReference>
<dbReference type="HAMAP" id="MF_00160">
    <property type="entry name" value="SerC_aminotrans_5"/>
    <property type="match status" value="1"/>
</dbReference>
<dbReference type="InterPro" id="IPR000192">
    <property type="entry name" value="Aminotrans_V_dom"/>
</dbReference>
<dbReference type="InterPro" id="IPR022278">
    <property type="entry name" value="Pser_aminoTfrase"/>
</dbReference>
<dbReference type="InterPro" id="IPR015424">
    <property type="entry name" value="PyrdxlP-dep_Trfase"/>
</dbReference>
<dbReference type="InterPro" id="IPR015421">
    <property type="entry name" value="PyrdxlP-dep_Trfase_major"/>
</dbReference>
<dbReference type="InterPro" id="IPR015422">
    <property type="entry name" value="PyrdxlP-dep_Trfase_small"/>
</dbReference>
<dbReference type="NCBIfam" id="NF003764">
    <property type="entry name" value="PRK05355.1"/>
    <property type="match status" value="1"/>
</dbReference>
<dbReference type="NCBIfam" id="TIGR01364">
    <property type="entry name" value="serC_1"/>
    <property type="match status" value="1"/>
</dbReference>
<dbReference type="PANTHER" id="PTHR43247">
    <property type="entry name" value="PHOSPHOSERINE AMINOTRANSFERASE"/>
    <property type="match status" value="1"/>
</dbReference>
<dbReference type="PANTHER" id="PTHR43247:SF1">
    <property type="entry name" value="PHOSPHOSERINE AMINOTRANSFERASE"/>
    <property type="match status" value="1"/>
</dbReference>
<dbReference type="Pfam" id="PF00266">
    <property type="entry name" value="Aminotran_5"/>
    <property type="match status" value="1"/>
</dbReference>
<dbReference type="PIRSF" id="PIRSF000525">
    <property type="entry name" value="SerC"/>
    <property type="match status" value="1"/>
</dbReference>
<dbReference type="SUPFAM" id="SSF53383">
    <property type="entry name" value="PLP-dependent transferases"/>
    <property type="match status" value="1"/>
</dbReference>
<gene>
    <name evidence="1" type="primary">serC</name>
    <name type="ordered locus">Pmen_1849</name>
</gene>
<sequence>MSKRAFNFCAGPAALPTAVLQRAQAEMLDWQGKGLSVMEMSHRSDEYVAIASQAEQDLRDLLAVPNDYKVLFLQGGASQQFAEIPLNLLPEDGVADYVETGIWSKKAIEEARRYGAINVAASAKSYDYFAIPGQNDWQLSKNAAYVHYCSNETIGGLQFDWVPQTGDIPLVVDMSSDILSRPIDVSQFGLIYAGAQKNIGPSGLVVVIVREDLLGRARSSCPTMLDYKISADNGSMYNTPATYSWYLSGLVFQWLKEQGGVEAMERINRAKKDLLYKAIDGSDFYSNPIAHNARSWMNVPFRLADEKLDKAFLAGADERGLLNLKGHRSVGGMRASIYNAVGLDAVEALVAYMAEFEKEHA</sequence>
<accession>A4XTE7</accession>
<organism>
    <name type="scientific">Ectopseudomonas mendocina (strain ymp)</name>
    <name type="common">Pseudomonas mendocina</name>
    <dbReference type="NCBI Taxonomy" id="399739"/>
    <lineage>
        <taxon>Bacteria</taxon>
        <taxon>Pseudomonadati</taxon>
        <taxon>Pseudomonadota</taxon>
        <taxon>Gammaproteobacteria</taxon>
        <taxon>Pseudomonadales</taxon>
        <taxon>Pseudomonadaceae</taxon>
        <taxon>Ectopseudomonas</taxon>
    </lineage>
</organism>
<proteinExistence type="inferred from homology"/>
<keyword id="KW-0028">Amino-acid biosynthesis</keyword>
<keyword id="KW-0032">Aminotransferase</keyword>
<keyword id="KW-0963">Cytoplasm</keyword>
<keyword id="KW-0663">Pyridoxal phosphate</keyword>
<keyword id="KW-0664">Pyridoxine biosynthesis</keyword>
<keyword id="KW-0718">Serine biosynthesis</keyword>
<keyword id="KW-0808">Transferase</keyword>
<protein>
    <recommendedName>
        <fullName evidence="1">Phosphoserine aminotransferase</fullName>
        <ecNumber evidence="1">2.6.1.52</ecNumber>
    </recommendedName>
    <alternativeName>
        <fullName evidence="1">Phosphohydroxythreonine aminotransferase</fullName>
        <shortName evidence="1">PSAT</shortName>
    </alternativeName>
</protein>
<comment type="function">
    <text evidence="1">Catalyzes the reversible conversion of 3-phosphohydroxypyruvate to phosphoserine and of 3-hydroxy-2-oxo-4-phosphonooxybutanoate to phosphohydroxythreonine.</text>
</comment>
<comment type="catalytic activity">
    <reaction evidence="1">
        <text>O-phospho-L-serine + 2-oxoglutarate = 3-phosphooxypyruvate + L-glutamate</text>
        <dbReference type="Rhea" id="RHEA:14329"/>
        <dbReference type="ChEBI" id="CHEBI:16810"/>
        <dbReference type="ChEBI" id="CHEBI:18110"/>
        <dbReference type="ChEBI" id="CHEBI:29985"/>
        <dbReference type="ChEBI" id="CHEBI:57524"/>
        <dbReference type="EC" id="2.6.1.52"/>
    </reaction>
</comment>
<comment type="catalytic activity">
    <reaction evidence="1">
        <text>4-(phosphooxy)-L-threonine + 2-oxoglutarate = (R)-3-hydroxy-2-oxo-4-phosphooxybutanoate + L-glutamate</text>
        <dbReference type="Rhea" id="RHEA:16573"/>
        <dbReference type="ChEBI" id="CHEBI:16810"/>
        <dbReference type="ChEBI" id="CHEBI:29985"/>
        <dbReference type="ChEBI" id="CHEBI:58452"/>
        <dbReference type="ChEBI" id="CHEBI:58538"/>
        <dbReference type="EC" id="2.6.1.52"/>
    </reaction>
</comment>
<comment type="cofactor">
    <cofactor evidence="1">
        <name>pyridoxal 5'-phosphate</name>
        <dbReference type="ChEBI" id="CHEBI:597326"/>
    </cofactor>
    <text evidence="1">Binds 1 pyridoxal phosphate per subunit.</text>
</comment>
<comment type="pathway">
    <text evidence="1">Amino-acid biosynthesis; L-serine biosynthesis; L-serine from 3-phospho-D-glycerate: step 2/3.</text>
</comment>
<comment type="pathway">
    <text evidence="1">Cofactor biosynthesis; pyridoxine 5'-phosphate biosynthesis; pyridoxine 5'-phosphate from D-erythrose 4-phosphate: step 3/5.</text>
</comment>
<comment type="subunit">
    <text evidence="1">Homodimer.</text>
</comment>
<comment type="subcellular location">
    <subcellularLocation>
        <location evidence="1">Cytoplasm</location>
    </subcellularLocation>
</comment>
<comment type="similarity">
    <text evidence="1">Belongs to the class-V pyridoxal-phosphate-dependent aminotransferase family. SerC subfamily.</text>
</comment>